<proteinExistence type="inferred from homology"/>
<accession>A7N141</accession>
<reference key="1">
    <citation type="submission" date="2007-08" db="EMBL/GenBank/DDBJ databases">
        <authorList>
            <consortium name="The Vibrio harveyi Genome Sequencing Project"/>
            <person name="Bassler B."/>
            <person name="Clifton S.W."/>
            <person name="Fulton L."/>
            <person name="Delehaunty K."/>
            <person name="Fronick C."/>
            <person name="Harrison M."/>
            <person name="Markivic C."/>
            <person name="Fulton R."/>
            <person name="Tin-Wollam A.-M."/>
            <person name="Shah N."/>
            <person name="Pepin K."/>
            <person name="Nash W."/>
            <person name="Thiruvilangam P."/>
            <person name="Bhonagiri V."/>
            <person name="Waters C."/>
            <person name="Tu K.C."/>
            <person name="Irgon J."/>
            <person name="Wilson R.K."/>
        </authorList>
    </citation>
    <scope>NUCLEOTIDE SEQUENCE [LARGE SCALE GENOMIC DNA]</scope>
    <source>
        <strain>ATCC BAA-1116 / BB120</strain>
    </source>
</reference>
<sequence length="646" mass="72596">MSSRKQARLEAKQFIDTLSVQPYPNSSKVYVEGSRPDIRVPMREISLADSLIGGTKEAPIFEPNEPVRVYDTSGVYTDPEHTIDLYNGLPKLREGWIEERSDTELLDEVSSVYTKERLEDETLDDLRYGNLPRIRRAKDGQCVTQLHYARQGIITPEMEYIALRENMGRAQYRDEVLNQQHPGQSFGANLPKDITAEFVRKEVAEGRAIIPSNINHPESEPMIIGRNFLVKVNANIGNSSVTSSIEEEVEKLVWATRWGGDTVMDLSTGRNIHETREWILRNSPVPIGTVPMYQALEKVNGVAENLNWEVMRDTLIEQAEQGVDYFTIHAGLLLRYVPMTAKRVTGIVSRGGSIIAKWCLAHHQESFLYTHFREICEICAKYDVAISLGDGLRPGSVADANDEAQFAELRTLGELTKVAWEYDVQVIIEGPGHVPMHMIKENMEEQLEHCHEAPFYTLGPLTTDVAPGYDHITSGIGAAMIGWYGCAMLCYVTPKEHLGLPNKEDVKVGMITYKLAAHAADLAKGHPGAQVRDNALSKARFEFRWEDQFNLSLDPDTARAFHDETLPQESGKVAHFCSMCGPKFCSMKISQEVREYAKDTEQVAADQAISIKMLDDPLEGMRQKSQEFRDTGSELYHPAAYAEVSD</sequence>
<feature type="chain" id="PRO_1000004814" description="Phosphomethylpyrimidine synthase">
    <location>
        <begin position="1"/>
        <end position="646"/>
    </location>
</feature>
<feature type="binding site" evidence="1">
    <location>
        <position position="235"/>
    </location>
    <ligand>
        <name>substrate</name>
    </ligand>
</feature>
<feature type="binding site" evidence="1">
    <location>
        <position position="264"/>
    </location>
    <ligand>
        <name>substrate</name>
    </ligand>
</feature>
<feature type="binding site" evidence="1">
    <location>
        <position position="293"/>
    </location>
    <ligand>
        <name>substrate</name>
    </ligand>
</feature>
<feature type="binding site" evidence="1">
    <location>
        <position position="329"/>
    </location>
    <ligand>
        <name>substrate</name>
    </ligand>
</feature>
<feature type="binding site" evidence="1">
    <location>
        <begin position="349"/>
        <end position="351"/>
    </location>
    <ligand>
        <name>substrate</name>
    </ligand>
</feature>
<feature type="binding site" evidence="1">
    <location>
        <begin position="390"/>
        <end position="393"/>
    </location>
    <ligand>
        <name>substrate</name>
    </ligand>
</feature>
<feature type="binding site" evidence="1">
    <location>
        <position position="429"/>
    </location>
    <ligand>
        <name>substrate</name>
    </ligand>
</feature>
<feature type="binding site" evidence="1">
    <location>
        <position position="433"/>
    </location>
    <ligand>
        <name>Zn(2+)</name>
        <dbReference type="ChEBI" id="CHEBI:29105"/>
    </ligand>
</feature>
<feature type="binding site" evidence="1">
    <location>
        <position position="456"/>
    </location>
    <ligand>
        <name>substrate</name>
    </ligand>
</feature>
<feature type="binding site" evidence="1">
    <location>
        <position position="497"/>
    </location>
    <ligand>
        <name>Zn(2+)</name>
        <dbReference type="ChEBI" id="CHEBI:29105"/>
    </ligand>
</feature>
<feature type="binding site" evidence="1">
    <location>
        <position position="577"/>
    </location>
    <ligand>
        <name>[4Fe-4S] cluster</name>
        <dbReference type="ChEBI" id="CHEBI:49883"/>
        <note>4Fe-4S-S-AdoMet</note>
    </ligand>
</feature>
<feature type="binding site" evidence="1">
    <location>
        <position position="580"/>
    </location>
    <ligand>
        <name>[4Fe-4S] cluster</name>
        <dbReference type="ChEBI" id="CHEBI:49883"/>
        <note>4Fe-4S-S-AdoMet</note>
    </ligand>
</feature>
<feature type="binding site" evidence="1">
    <location>
        <position position="585"/>
    </location>
    <ligand>
        <name>[4Fe-4S] cluster</name>
        <dbReference type="ChEBI" id="CHEBI:49883"/>
        <note>4Fe-4S-S-AdoMet</note>
    </ligand>
</feature>
<protein>
    <recommendedName>
        <fullName evidence="1">Phosphomethylpyrimidine synthase</fullName>
        <ecNumber evidence="1">4.1.99.17</ecNumber>
    </recommendedName>
    <alternativeName>
        <fullName evidence="1">Hydroxymethylpyrimidine phosphate synthase</fullName>
        <shortName evidence="1">HMP-P synthase</shortName>
        <shortName evidence="1">HMP-phosphate synthase</shortName>
        <shortName evidence="1">HMPP synthase</shortName>
    </alternativeName>
    <alternativeName>
        <fullName evidence="1">Thiamine biosynthesis protein ThiC</fullName>
    </alternativeName>
</protein>
<name>THIC_VIBC1</name>
<gene>
    <name evidence="1" type="primary">thiC</name>
    <name type="ordered locus">VIBHAR_00366</name>
</gene>
<organism>
    <name type="scientific">Vibrio campbellii (strain ATCC BAA-1116)</name>
    <dbReference type="NCBI Taxonomy" id="2902295"/>
    <lineage>
        <taxon>Bacteria</taxon>
        <taxon>Pseudomonadati</taxon>
        <taxon>Pseudomonadota</taxon>
        <taxon>Gammaproteobacteria</taxon>
        <taxon>Vibrionales</taxon>
        <taxon>Vibrionaceae</taxon>
        <taxon>Vibrio</taxon>
    </lineage>
</organism>
<dbReference type="EC" id="4.1.99.17" evidence="1"/>
<dbReference type="EMBL" id="CP000789">
    <property type="protein sequence ID" value="ABU69387.1"/>
    <property type="molecule type" value="Genomic_DNA"/>
</dbReference>
<dbReference type="RefSeq" id="WP_012126625.1">
    <property type="nucleotide sequence ID" value="NC_009783.1"/>
</dbReference>
<dbReference type="SMR" id="A7N141"/>
<dbReference type="KEGG" id="vha:VIBHAR_00366"/>
<dbReference type="PATRIC" id="fig|338187.25.peg.2216"/>
<dbReference type="UniPathway" id="UPA00060"/>
<dbReference type="Proteomes" id="UP000008152">
    <property type="component" value="Chromosome I"/>
</dbReference>
<dbReference type="GO" id="GO:0005829">
    <property type="term" value="C:cytosol"/>
    <property type="evidence" value="ECO:0007669"/>
    <property type="project" value="TreeGrafter"/>
</dbReference>
<dbReference type="GO" id="GO:0051539">
    <property type="term" value="F:4 iron, 4 sulfur cluster binding"/>
    <property type="evidence" value="ECO:0007669"/>
    <property type="project" value="UniProtKB-KW"/>
</dbReference>
<dbReference type="GO" id="GO:0016830">
    <property type="term" value="F:carbon-carbon lyase activity"/>
    <property type="evidence" value="ECO:0007669"/>
    <property type="project" value="InterPro"/>
</dbReference>
<dbReference type="GO" id="GO:0008270">
    <property type="term" value="F:zinc ion binding"/>
    <property type="evidence" value="ECO:0007669"/>
    <property type="project" value="UniProtKB-UniRule"/>
</dbReference>
<dbReference type="GO" id="GO:0009228">
    <property type="term" value="P:thiamine biosynthetic process"/>
    <property type="evidence" value="ECO:0007669"/>
    <property type="project" value="UniProtKB-KW"/>
</dbReference>
<dbReference type="GO" id="GO:0009229">
    <property type="term" value="P:thiamine diphosphate biosynthetic process"/>
    <property type="evidence" value="ECO:0007669"/>
    <property type="project" value="UniProtKB-UniRule"/>
</dbReference>
<dbReference type="FunFam" id="3.20.20.540:FF:000001">
    <property type="entry name" value="Phosphomethylpyrimidine synthase"/>
    <property type="match status" value="1"/>
</dbReference>
<dbReference type="Gene3D" id="6.10.250.620">
    <property type="match status" value="1"/>
</dbReference>
<dbReference type="Gene3D" id="3.20.20.540">
    <property type="entry name" value="Radical SAM ThiC family, central domain"/>
    <property type="match status" value="1"/>
</dbReference>
<dbReference type="HAMAP" id="MF_00089">
    <property type="entry name" value="ThiC"/>
    <property type="match status" value="1"/>
</dbReference>
<dbReference type="InterPro" id="IPR037509">
    <property type="entry name" value="ThiC"/>
</dbReference>
<dbReference type="InterPro" id="IPR025747">
    <property type="entry name" value="ThiC-associated_dom"/>
</dbReference>
<dbReference type="InterPro" id="IPR038521">
    <property type="entry name" value="ThiC/Bza_core_dom"/>
</dbReference>
<dbReference type="InterPro" id="IPR002817">
    <property type="entry name" value="ThiC/BzaA/B"/>
</dbReference>
<dbReference type="NCBIfam" id="NF006763">
    <property type="entry name" value="PRK09284.1"/>
    <property type="match status" value="1"/>
</dbReference>
<dbReference type="NCBIfam" id="NF009895">
    <property type="entry name" value="PRK13352.1"/>
    <property type="match status" value="1"/>
</dbReference>
<dbReference type="NCBIfam" id="TIGR00190">
    <property type="entry name" value="thiC"/>
    <property type="match status" value="1"/>
</dbReference>
<dbReference type="PANTHER" id="PTHR30557:SF1">
    <property type="entry name" value="PHOSPHOMETHYLPYRIMIDINE SYNTHASE, CHLOROPLASTIC"/>
    <property type="match status" value="1"/>
</dbReference>
<dbReference type="PANTHER" id="PTHR30557">
    <property type="entry name" value="THIAMINE BIOSYNTHESIS PROTEIN THIC"/>
    <property type="match status" value="1"/>
</dbReference>
<dbReference type="Pfam" id="PF13667">
    <property type="entry name" value="ThiC-associated"/>
    <property type="match status" value="1"/>
</dbReference>
<dbReference type="Pfam" id="PF01964">
    <property type="entry name" value="ThiC_Rad_SAM"/>
    <property type="match status" value="1"/>
</dbReference>
<dbReference type="SFLD" id="SFLDF00407">
    <property type="entry name" value="phosphomethylpyrimidine_syntha"/>
    <property type="match status" value="1"/>
</dbReference>
<dbReference type="SFLD" id="SFLDG01114">
    <property type="entry name" value="phosphomethylpyrimidine_syntha"/>
    <property type="match status" value="1"/>
</dbReference>
<dbReference type="SFLD" id="SFLDS00113">
    <property type="entry name" value="Radical_SAM_Phosphomethylpyrim"/>
    <property type="match status" value="1"/>
</dbReference>
<comment type="function">
    <text evidence="1">Catalyzes the synthesis of the hydroxymethylpyrimidine phosphate (HMP-P) moiety of thiamine from aminoimidazole ribotide (AIR) in a radical S-adenosyl-L-methionine (SAM)-dependent reaction.</text>
</comment>
<comment type="catalytic activity">
    <reaction evidence="1">
        <text>5-amino-1-(5-phospho-beta-D-ribosyl)imidazole + S-adenosyl-L-methionine = 4-amino-2-methyl-5-(phosphooxymethyl)pyrimidine + CO + 5'-deoxyadenosine + formate + L-methionine + 3 H(+)</text>
        <dbReference type="Rhea" id="RHEA:24840"/>
        <dbReference type="ChEBI" id="CHEBI:15378"/>
        <dbReference type="ChEBI" id="CHEBI:15740"/>
        <dbReference type="ChEBI" id="CHEBI:17245"/>
        <dbReference type="ChEBI" id="CHEBI:17319"/>
        <dbReference type="ChEBI" id="CHEBI:57844"/>
        <dbReference type="ChEBI" id="CHEBI:58354"/>
        <dbReference type="ChEBI" id="CHEBI:59789"/>
        <dbReference type="ChEBI" id="CHEBI:137981"/>
        <dbReference type="EC" id="4.1.99.17"/>
    </reaction>
</comment>
<comment type="cofactor">
    <cofactor evidence="1">
        <name>[4Fe-4S] cluster</name>
        <dbReference type="ChEBI" id="CHEBI:49883"/>
    </cofactor>
    <text evidence="1">Binds 1 [4Fe-4S] cluster per subunit. The cluster is coordinated with 3 cysteines and an exchangeable S-adenosyl-L-methionine.</text>
</comment>
<comment type="pathway">
    <text evidence="1">Cofactor biosynthesis; thiamine diphosphate biosynthesis.</text>
</comment>
<comment type="subunit">
    <text evidence="1">Homodimer.</text>
</comment>
<comment type="similarity">
    <text evidence="1">Belongs to the ThiC family.</text>
</comment>
<evidence type="ECO:0000255" key="1">
    <source>
        <dbReference type="HAMAP-Rule" id="MF_00089"/>
    </source>
</evidence>
<keyword id="KW-0004">4Fe-4S</keyword>
<keyword id="KW-0408">Iron</keyword>
<keyword id="KW-0411">Iron-sulfur</keyword>
<keyword id="KW-0456">Lyase</keyword>
<keyword id="KW-0479">Metal-binding</keyword>
<keyword id="KW-0949">S-adenosyl-L-methionine</keyword>
<keyword id="KW-0784">Thiamine biosynthesis</keyword>
<keyword id="KW-0862">Zinc</keyword>